<proteinExistence type="evidence at protein level"/>
<sequence>MMIFRALIAAATLAIAIATTLPAAADEVAVKMLNSGPGGMMVFDPALVRLKPGDSIKFLPTDKGHNVETIKGMAPDGADYVKTTVGQEAVVKFDKEGVYGFKCAPHYMMGMVALVVVGDKRDNLEAAKSVQHNKLTQKRLDPLFAQIQ</sequence>
<gene>
    <name type="ordered locus">MexAM1_META1p0857</name>
</gene>
<evidence type="ECO:0000269" key="1">
    <source>
    </source>
</evidence>
<evidence type="ECO:0007829" key="2">
    <source>
        <dbReference type="PDB" id="1PMY"/>
    </source>
</evidence>
<feature type="signal peptide" evidence="1">
    <location>
        <begin position="1"/>
        <end position="25"/>
    </location>
</feature>
<feature type="chain" id="PRO_0000085539" description="Pseudoazurin">
    <location>
        <begin position="26"/>
        <end position="148"/>
    </location>
</feature>
<feature type="domain" description="Plastocyanin-like">
    <location>
        <begin position="30"/>
        <end position="118"/>
    </location>
</feature>
<feature type="binding site">
    <location>
        <position position="65"/>
    </location>
    <ligand>
        <name>Cu cation</name>
        <dbReference type="ChEBI" id="CHEBI:23378"/>
    </ligand>
</feature>
<feature type="binding site">
    <location>
        <position position="103"/>
    </location>
    <ligand>
        <name>Cu cation</name>
        <dbReference type="ChEBI" id="CHEBI:23378"/>
    </ligand>
</feature>
<feature type="binding site">
    <location>
        <position position="106"/>
    </location>
    <ligand>
        <name>Cu cation</name>
        <dbReference type="ChEBI" id="CHEBI:23378"/>
    </ligand>
</feature>
<feature type="binding site">
    <location>
        <position position="111"/>
    </location>
    <ligand>
        <name>Cu cation</name>
        <dbReference type="ChEBI" id="CHEBI:23378"/>
    </ligand>
</feature>
<feature type="strand" evidence="2">
    <location>
        <begin position="27"/>
        <end position="36"/>
    </location>
</feature>
<feature type="strand" evidence="2">
    <location>
        <begin position="39"/>
        <end position="50"/>
    </location>
</feature>
<feature type="strand" evidence="2">
    <location>
        <begin position="55"/>
        <end position="59"/>
    </location>
</feature>
<feature type="strand" evidence="2">
    <location>
        <begin position="61"/>
        <end position="64"/>
    </location>
</feature>
<feature type="strand" evidence="2">
    <location>
        <begin position="89"/>
        <end position="92"/>
    </location>
</feature>
<feature type="strand" evidence="2">
    <location>
        <begin position="97"/>
        <end position="102"/>
    </location>
</feature>
<feature type="turn" evidence="2">
    <location>
        <begin position="105"/>
        <end position="110"/>
    </location>
</feature>
<feature type="strand" evidence="2">
    <location>
        <begin position="112"/>
        <end position="119"/>
    </location>
</feature>
<feature type="helix" evidence="2">
    <location>
        <begin position="124"/>
        <end position="128"/>
    </location>
</feature>
<feature type="helix" evidence="2">
    <location>
        <begin position="134"/>
        <end position="145"/>
    </location>
</feature>
<dbReference type="EMBL" id="CP001510">
    <property type="protein sequence ID" value="ACS38778.1"/>
    <property type="molecule type" value="Genomic_DNA"/>
</dbReference>
<dbReference type="PIR" id="A00293">
    <property type="entry name" value="CUPSZM"/>
</dbReference>
<dbReference type="RefSeq" id="WP_012752226.1">
    <property type="nucleotide sequence ID" value="NC_012808.1"/>
</dbReference>
<dbReference type="PDB" id="1PMY">
    <property type="method" value="X-ray"/>
    <property type="resolution" value="1.50 A"/>
    <property type="chains" value="A=26-148"/>
</dbReference>
<dbReference type="PDBsum" id="1PMY"/>
<dbReference type="SMR" id="P04171"/>
<dbReference type="STRING" id="272630.MexAM1_META1p0857"/>
<dbReference type="KEGG" id="mea:Mex_1p0857"/>
<dbReference type="eggNOG" id="COG3794">
    <property type="taxonomic scope" value="Bacteria"/>
</dbReference>
<dbReference type="HOGENOM" id="CLU_124330_0_0_5"/>
<dbReference type="OrthoDB" id="7510199at2"/>
<dbReference type="EvolutionaryTrace" id="P04171"/>
<dbReference type="Proteomes" id="UP000009081">
    <property type="component" value="Chromosome"/>
</dbReference>
<dbReference type="GO" id="GO:0042597">
    <property type="term" value="C:periplasmic space"/>
    <property type="evidence" value="ECO:0007669"/>
    <property type="project" value="UniProtKB-SubCell"/>
</dbReference>
<dbReference type="GO" id="GO:0005507">
    <property type="term" value="F:copper ion binding"/>
    <property type="evidence" value="ECO:0007669"/>
    <property type="project" value="InterPro"/>
</dbReference>
<dbReference type="GO" id="GO:0009055">
    <property type="term" value="F:electron transfer activity"/>
    <property type="evidence" value="ECO:0007669"/>
    <property type="project" value="InterPro"/>
</dbReference>
<dbReference type="CDD" id="cd04218">
    <property type="entry name" value="Pseudoazurin"/>
    <property type="match status" value="1"/>
</dbReference>
<dbReference type="Gene3D" id="2.60.40.420">
    <property type="entry name" value="Cupredoxins - blue copper proteins"/>
    <property type="match status" value="1"/>
</dbReference>
<dbReference type="InterPro" id="IPR002386">
    <property type="entry name" value="Amicyanin/Pseudoazurin"/>
</dbReference>
<dbReference type="InterPro" id="IPR000923">
    <property type="entry name" value="BlueCu_1"/>
</dbReference>
<dbReference type="InterPro" id="IPR028871">
    <property type="entry name" value="BlueCu_1_BS"/>
</dbReference>
<dbReference type="InterPro" id="IPR001235">
    <property type="entry name" value="Copper_blue_Plastocyanin"/>
</dbReference>
<dbReference type="InterPro" id="IPR008972">
    <property type="entry name" value="Cupredoxin"/>
</dbReference>
<dbReference type="InterPro" id="IPR012745">
    <property type="entry name" value="Pseudoazurin"/>
</dbReference>
<dbReference type="NCBIfam" id="TIGR02375">
    <property type="entry name" value="pseudoazurin"/>
    <property type="match status" value="1"/>
</dbReference>
<dbReference type="Pfam" id="PF00127">
    <property type="entry name" value="Copper-bind"/>
    <property type="match status" value="1"/>
</dbReference>
<dbReference type="PRINTS" id="PR00155">
    <property type="entry name" value="AMICYANIN"/>
</dbReference>
<dbReference type="PRINTS" id="PR00156">
    <property type="entry name" value="COPPERBLUE"/>
</dbReference>
<dbReference type="SUPFAM" id="SSF49503">
    <property type="entry name" value="Cupredoxins"/>
    <property type="match status" value="1"/>
</dbReference>
<dbReference type="PROSITE" id="PS00196">
    <property type="entry name" value="COPPER_BLUE"/>
    <property type="match status" value="1"/>
</dbReference>
<comment type="cofactor">
    <cofactor>
        <name>Cu cation</name>
        <dbReference type="ChEBI" id="CHEBI:23378"/>
    </cofactor>
    <text>Binds 1 copper ion per subunit.</text>
</comment>
<comment type="subcellular location">
    <subcellularLocation>
        <location>Periplasm</location>
    </subcellularLocation>
</comment>
<reference key="1">
    <citation type="journal article" date="2009" name="PLoS ONE">
        <title>Methylobacterium genome sequences: a reference blueprint to investigate microbial metabolism of C1 compounds from natural and industrial sources.</title>
        <authorList>
            <person name="Vuilleumier S."/>
            <person name="Chistoserdova L."/>
            <person name="Lee M.-C."/>
            <person name="Bringel F."/>
            <person name="Lajus A."/>
            <person name="Zhou Y."/>
            <person name="Gourion B."/>
            <person name="Barbe V."/>
            <person name="Chang J."/>
            <person name="Cruveiller S."/>
            <person name="Dossat C."/>
            <person name="Gillett W."/>
            <person name="Gruffaz C."/>
            <person name="Haugen E."/>
            <person name="Hourcade E."/>
            <person name="Levy R."/>
            <person name="Mangenot S."/>
            <person name="Muller E."/>
            <person name="Nadalig T."/>
            <person name="Pagni M."/>
            <person name="Penny C."/>
            <person name="Peyraud R."/>
            <person name="Robinson D.G."/>
            <person name="Roche D."/>
            <person name="Rouy Z."/>
            <person name="Saenampechek C."/>
            <person name="Salvignol G."/>
            <person name="Vallenet D."/>
            <person name="Wu Z."/>
            <person name="Marx C.J."/>
            <person name="Vorholt J.A."/>
            <person name="Olson M.V."/>
            <person name="Kaul R."/>
            <person name="Weissenbach J."/>
            <person name="Medigue C."/>
            <person name="Lidstrom M.E."/>
        </authorList>
    </citation>
    <scope>NUCLEOTIDE SEQUENCE [LARGE SCALE GENOMIC DNA]</scope>
    <source>
        <strain>ATCC 14718 / DSM 1338 / JCM 2805 / NCIMB 9133 / AM1</strain>
    </source>
</reference>
<reference key="2">
    <citation type="journal article" date="1985" name="Biochem. J.">
        <title>The primary structures of Pseudomonas AM1 amicyanin and pseudoazurin. Two new sequence classes of blue copper proteins.</title>
        <authorList>
            <person name="Ambler R.P."/>
            <person name="Tobari J."/>
        </authorList>
    </citation>
    <scope>PROTEIN SEQUENCE OF 26-148</scope>
</reference>
<reference key="3">
    <citation type="journal article" date="1994" name="Acta Crystallogr. D">
        <title>Refined crystal structure of pseudoazurin from Methylobacterium extorquens AM1 at 1.5-A resolution.</title>
        <authorList>
            <person name="Inoue T."/>
            <person name="Kai Y."/>
            <person name="Harada S."/>
            <person name="Kasai N."/>
            <person name="Ohshiro Y."/>
            <person name="Suzuki S."/>
            <person name="Kohzuma T."/>
            <person name="Tobari J."/>
        </authorList>
    </citation>
    <scope>X-RAY CRYSTALLOGRAPHY (1.5 ANGSTROMS) OF 26-148</scope>
</reference>
<name>AZUP_METEA</name>
<keyword id="KW-0002">3D-structure</keyword>
<keyword id="KW-0186">Copper</keyword>
<keyword id="KW-0903">Direct protein sequencing</keyword>
<keyword id="KW-0249">Electron transport</keyword>
<keyword id="KW-0479">Metal-binding</keyword>
<keyword id="KW-0574">Periplasm</keyword>
<keyword id="KW-1185">Reference proteome</keyword>
<keyword id="KW-0732">Signal</keyword>
<keyword id="KW-0813">Transport</keyword>
<accession>P04171</accession>
<accession>C5AWF0</accession>
<protein>
    <recommendedName>
        <fullName>Pseudoazurin</fullName>
    </recommendedName>
</protein>
<organism>
    <name type="scientific">Methylorubrum extorquens (strain ATCC 14718 / DSM 1338 / JCM 2805 / NCIMB 9133 / AM1)</name>
    <name type="common">Methylobacterium extorquens</name>
    <dbReference type="NCBI Taxonomy" id="272630"/>
    <lineage>
        <taxon>Bacteria</taxon>
        <taxon>Pseudomonadati</taxon>
        <taxon>Pseudomonadota</taxon>
        <taxon>Alphaproteobacteria</taxon>
        <taxon>Hyphomicrobiales</taxon>
        <taxon>Methylobacteriaceae</taxon>
        <taxon>Methylorubrum</taxon>
    </lineage>
</organism>